<evidence type="ECO:0000250" key="1">
    <source>
        <dbReference type="UniProtKB" id="P00639"/>
    </source>
</evidence>
<evidence type="ECO:0000250" key="2">
    <source>
        <dbReference type="UniProtKB" id="P21704"/>
    </source>
</evidence>
<evidence type="ECO:0000250" key="3">
    <source>
        <dbReference type="UniProtKB" id="P24855"/>
    </source>
</evidence>
<evidence type="ECO:0000250" key="4">
    <source>
        <dbReference type="UniProtKB" id="P49183"/>
    </source>
</evidence>
<evidence type="ECO:0000269" key="5">
    <source>
    </source>
</evidence>
<evidence type="ECO:0000305" key="6"/>
<keyword id="KW-0009">Actin-binding</keyword>
<keyword id="KW-0053">Apoptosis</keyword>
<keyword id="KW-0106">Calcium</keyword>
<keyword id="KW-0968">Cytoplasmic vesicle</keyword>
<keyword id="KW-0903">Direct protein sequencing</keyword>
<keyword id="KW-1015">Disulfide bond</keyword>
<keyword id="KW-0255">Endonuclease</keyword>
<keyword id="KW-0325">Glycoprotein</keyword>
<keyword id="KW-0378">Hydrolase</keyword>
<keyword id="KW-0540">Nuclease</keyword>
<keyword id="KW-0539">Nucleus</keyword>
<keyword id="KW-1185">Reference proteome</keyword>
<keyword id="KW-0964">Secreted</keyword>
<keyword id="KW-0732">Signal</keyword>
<name>DNAS1_RABIT</name>
<reference key="1">
    <citation type="journal article" date="1997" name="Biochem. J.">
        <title>Rabbit DNase I: purification from urine, immunological and proteochemical characterization, nucleotide sequence, expression in tissues, relationships with other mammalian DNases I and phylogenetic analysis.</title>
        <authorList>
            <person name="Yasuda T."/>
            <person name="Takeshita H."/>
            <person name="Nakajima T."/>
            <person name="Hosomi O."/>
            <person name="Nakashima Y."/>
            <person name="Kishi K."/>
        </authorList>
    </citation>
    <scope>NUCLEOTIDE SEQUENCE [MRNA]</scope>
    <scope>PROTEIN SEQUENCE OF 22-41</scope>
    <scope>FUNCTION</scope>
    <scope>CATALYTIC ACTIVITY</scope>
    <scope>GLYCOSYLATION AT ASN-39</scope>
    <source>
        <strain>Japanese white</strain>
        <tissue>Pancreas</tissue>
        <tissue>Urine</tissue>
    </source>
</reference>
<sequence>MRSEMLTALLTLAVLLQVAGSLKIAAFNIRSFGETKMSNATLTSYIVRILQRYDIALIQEVRDSHLTAVGKLLDKLNEKAADTYRFVASEPLGRRTYKERYLFVYRPDQVSVLDSYYYDDGCEPCGTDTFSREPAVVRFSSPSTKVREFAIVPLHSAPEDAVAEIDALYDVYLDVQKKWGLQDVMLMGDFNADYSYVTSSQWSSIRLRTNPAFKWLIPDTADTTATSTNCAYDRIVVAGPLLQDAVVPNSAAPFNFQAAYGLSNQLAQAISDHYPVEVTLA</sequence>
<feature type="signal peptide" evidence="5">
    <location>
        <begin position="1"/>
        <end position="21"/>
    </location>
</feature>
<feature type="chain" id="PRO_0000007280" description="Deoxyribonuclease-1">
    <location>
        <begin position="22"/>
        <end position="281"/>
    </location>
</feature>
<feature type="active site" evidence="1">
    <location>
        <position position="99"/>
    </location>
</feature>
<feature type="active site" evidence="1">
    <location>
        <position position="155"/>
    </location>
</feature>
<feature type="site" description="Involved in actin-binding" evidence="1">
    <location>
        <position position="34"/>
    </location>
</feature>
<feature type="glycosylation site" description="N-linked (GlcNAc...) asparagine" evidence="5">
    <location>
        <position position="39"/>
    </location>
</feature>
<feature type="disulfide bond" evidence="1">
    <location>
        <begin position="122"/>
        <end position="125"/>
    </location>
</feature>
<comment type="function">
    <text evidence="2 4 5">Serum endocuclease secreted into body fluids by a wide variety of exocrine and endocrine organs (PubMed:9230129). Expressed by non-hematopoietic tissues and preferentially cleaves protein-free DNA (By similarity). Among other functions, seems to be involved in cell death by apoptosis. Binds specifically to G-actin and blocks actin polymerization (PubMed:9230129). Preferentially attacks double-stranded DNA and produces oligonucleotides with 5'-phospho and 3'-hydroxy termini (PubMed:9230129). Together with DNASE1L3, plays a key role in degrading neutrophil extracellular traps (NETs) (By similarity). NETs are mainly composed of DNA fibers and are released by neutrophils to bind pathogens during inflammation (By similarity). Degradation of intravascular NETs by DNASE1 and DNASE1L3 is required to prevent formation of clots that obstruct blood vessels and cause organ damage following inflammation (By similarity).</text>
</comment>
<comment type="catalytic activity">
    <reaction evidence="5">
        <text>Endonucleolytic cleavage to 5'-phosphodinucleotide and 5'-phosphooligonucleotide end-products.</text>
        <dbReference type="EC" id="3.1.21.1"/>
    </reaction>
</comment>
<comment type="cofactor">
    <cofactor evidence="3">
        <name>Ca(2+)</name>
        <dbReference type="ChEBI" id="CHEBI:29108"/>
    </cofactor>
    <cofactor evidence="3">
        <name>Mg(2+)</name>
        <dbReference type="ChEBI" id="CHEBI:18420"/>
    </cofactor>
    <text evidence="3">Divalent metal cations. Prefers Ca(2+) or Mg(2+).</text>
</comment>
<comment type="subcellular location">
    <subcellularLocation>
        <location evidence="3">Secreted</location>
    </subcellularLocation>
    <subcellularLocation>
        <location evidence="3">Zymogen granule</location>
    </subcellularLocation>
    <subcellularLocation>
        <location evidence="3">Nucleus envelope</location>
    </subcellularLocation>
    <text evidence="3">Secretory protein, stored in zymogen granules and found in the nuclear envelope.</text>
</comment>
<comment type="tissue specificity">
    <text evidence="5">Equivalent levels in pancreas and parotid gland, low amounts in kidney, liver, small intestine, stomach and thymus.</text>
</comment>
<comment type="similarity">
    <text evidence="6">Belongs to the DNase I family.</text>
</comment>
<comment type="caution">
    <text evidence="6">It is uncertain whether Met-1 or Met-5 is the initiator.</text>
</comment>
<proteinExistence type="evidence at protein level"/>
<protein>
    <recommendedName>
        <fullName>Deoxyribonuclease-1</fullName>
        <ecNumber evidence="5">3.1.21.1</ecNumber>
    </recommendedName>
    <alternativeName>
        <fullName>Deoxyribonuclease I</fullName>
        <shortName>DNase I</shortName>
    </alternativeName>
</protein>
<dbReference type="EC" id="3.1.21.1" evidence="5"/>
<dbReference type="EMBL" id="D82875">
    <property type="protein sequence ID" value="BAA21724.1"/>
    <property type="molecule type" value="mRNA"/>
</dbReference>
<dbReference type="RefSeq" id="NP_001076209.1">
    <property type="nucleotide sequence ID" value="NM_001082740.1"/>
</dbReference>
<dbReference type="SMR" id="O18998"/>
<dbReference type="FunCoup" id="O18998">
    <property type="interactions" value="225"/>
</dbReference>
<dbReference type="STRING" id="9986.ENSOCUP00000009746"/>
<dbReference type="GlyCosmos" id="O18998">
    <property type="glycosylation" value="1 site, No reported glycans"/>
</dbReference>
<dbReference type="iPTMnet" id="O18998"/>
<dbReference type="PaxDb" id="9986-ENSOCUP00000009746"/>
<dbReference type="GeneID" id="100009513"/>
<dbReference type="KEGG" id="ocu:100009513"/>
<dbReference type="CTD" id="1773"/>
<dbReference type="eggNOG" id="ENOG502QQFT">
    <property type="taxonomic scope" value="Eukaryota"/>
</dbReference>
<dbReference type="InParanoid" id="O18998"/>
<dbReference type="OrthoDB" id="10061407at2759"/>
<dbReference type="Proteomes" id="UP000001811">
    <property type="component" value="Unplaced"/>
</dbReference>
<dbReference type="GO" id="GO:0005576">
    <property type="term" value="C:extracellular region"/>
    <property type="evidence" value="ECO:0007669"/>
    <property type="project" value="UniProtKB-SubCell"/>
</dbReference>
<dbReference type="GO" id="GO:0005635">
    <property type="term" value="C:nuclear envelope"/>
    <property type="evidence" value="ECO:0007669"/>
    <property type="project" value="UniProtKB-SubCell"/>
</dbReference>
<dbReference type="GO" id="GO:0042588">
    <property type="term" value="C:zymogen granule"/>
    <property type="evidence" value="ECO:0007669"/>
    <property type="project" value="UniProtKB-SubCell"/>
</dbReference>
<dbReference type="GO" id="GO:0003779">
    <property type="term" value="F:actin binding"/>
    <property type="evidence" value="ECO:0007669"/>
    <property type="project" value="UniProtKB-KW"/>
</dbReference>
<dbReference type="GO" id="GO:0004530">
    <property type="term" value="F:deoxyribonuclease I activity"/>
    <property type="evidence" value="ECO:0007669"/>
    <property type="project" value="UniProtKB-EC"/>
</dbReference>
<dbReference type="GO" id="GO:0003677">
    <property type="term" value="F:DNA binding"/>
    <property type="evidence" value="ECO:0007669"/>
    <property type="project" value="TreeGrafter"/>
</dbReference>
<dbReference type="GO" id="GO:0006915">
    <property type="term" value="P:apoptotic process"/>
    <property type="evidence" value="ECO:0007669"/>
    <property type="project" value="UniProtKB-KW"/>
</dbReference>
<dbReference type="GO" id="GO:0006308">
    <property type="term" value="P:DNA catabolic process"/>
    <property type="evidence" value="ECO:0000250"/>
    <property type="project" value="UniProtKB"/>
</dbReference>
<dbReference type="GO" id="GO:0002283">
    <property type="term" value="P:neutrophil activation involved in immune response"/>
    <property type="evidence" value="ECO:0000250"/>
    <property type="project" value="UniProtKB"/>
</dbReference>
<dbReference type="GO" id="GO:0002673">
    <property type="term" value="P:regulation of acute inflammatory response"/>
    <property type="evidence" value="ECO:0000250"/>
    <property type="project" value="UniProtKB"/>
</dbReference>
<dbReference type="GO" id="GO:0070948">
    <property type="term" value="P:regulation of neutrophil mediated cytotoxicity"/>
    <property type="evidence" value="ECO:0000250"/>
    <property type="project" value="UniProtKB"/>
</dbReference>
<dbReference type="CDD" id="cd10282">
    <property type="entry name" value="DNase1"/>
    <property type="match status" value="1"/>
</dbReference>
<dbReference type="FunFam" id="3.60.10.10:FF:000035">
    <property type="entry name" value="Deoxyribonuclease"/>
    <property type="match status" value="1"/>
</dbReference>
<dbReference type="Gene3D" id="3.60.10.10">
    <property type="entry name" value="Endonuclease/exonuclease/phosphatase"/>
    <property type="match status" value="1"/>
</dbReference>
<dbReference type="InterPro" id="IPR018057">
    <property type="entry name" value="Deoxyribonuclease-1_AS"/>
</dbReference>
<dbReference type="InterPro" id="IPR016202">
    <property type="entry name" value="DNase_I"/>
</dbReference>
<dbReference type="InterPro" id="IPR036691">
    <property type="entry name" value="Endo/exonu/phosph_ase_sf"/>
</dbReference>
<dbReference type="InterPro" id="IPR005135">
    <property type="entry name" value="Endo/exonuclease/phosphatase"/>
</dbReference>
<dbReference type="PANTHER" id="PTHR11371">
    <property type="entry name" value="DEOXYRIBONUCLEASE"/>
    <property type="match status" value="1"/>
</dbReference>
<dbReference type="PANTHER" id="PTHR11371:SF27">
    <property type="entry name" value="DEOXYRIBONUCLEASE-1"/>
    <property type="match status" value="1"/>
</dbReference>
<dbReference type="Pfam" id="PF03372">
    <property type="entry name" value="Exo_endo_phos"/>
    <property type="match status" value="1"/>
</dbReference>
<dbReference type="PIRSF" id="PIRSF000988">
    <property type="entry name" value="DNase_I_euk"/>
    <property type="match status" value="1"/>
</dbReference>
<dbReference type="PRINTS" id="PR00130">
    <property type="entry name" value="DNASEI"/>
</dbReference>
<dbReference type="SMART" id="SM00476">
    <property type="entry name" value="DNaseIc"/>
    <property type="match status" value="1"/>
</dbReference>
<dbReference type="SUPFAM" id="SSF56219">
    <property type="entry name" value="DNase I-like"/>
    <property type="match status" value="1"/>
</dbReference>
<dbReference type="PROSITE" id="PS00919">
    <property type="entry name" value="DNASE_I_1"/>
    <property type="match status" value="1"/>
</dbReference>
<accession>O18998</accession>
<gene>
    <name type="primary">DNASE1</name>
    <name type="synonym">DNL1</name>
</gene>
<organism>
    <name type="scientific">Oryctolagus cuniculus</name>
    <name type="common">Rabbit</name>
    <dbReference type="NCBI Taxonomy" id="9986"/>
    <lineage>
        <taxon>Eukaryota</taxon>
        <taxon>Metazoa</taxon>
        <taxon>Chordata</taxon>
        <taxon>Craniata</taxon>
        <taxon>Vertebrata</taxon>
        <taxon>Euteleostomi</taxon>
        <taxon>Mammalia</taxon>
        <taxon>Eutheria</taxon>
        <taxon>Euarchontoglires</taxon>
        <taxon>Glires</taxon>
        <taxon>Lagomorpha</taxon>
        <taxon>Leporidae</taxon>
        <taxon>Oryctolagus</taxon>
    </lineage>
</organism>